<dbReference type="EC" id="6.1.1.15" evidence="1"/>
<dbReference type="EMBL" id="CP000023">
    <property type="protein sequence ID" value="AAV59925.1"/>
    <property type="molecule type" value="Genomic_DNA"/>
</dbReference>
<dbReference type="RefSeq" id="WP_011225397.1">
    <property type="nucleotide sequence ID" value="NC_006448.1"/>
</dbReference>
<dbReference type="SMR" id="Q5M674"/>
<dbReference type="STRING" id="264199.stu0200"/>
<dbReference type="GeneID" id="66898136"/>
<dbReference type="KEGG" id="stl:stu0200"/>
<dbReference type="eggNOG" id="COG0442">
    <property type="taxonomic scope" value="Bacteria"/>
</dbReference>
<dbReference type="HOGENOM" id="CLU_016739_0_0_9"/>
<dbReference type="Proteomes" id="UP000001170">
    <property type="component" value="Chromosome"/>
</dbReference>
<dbReference type="GO" id="GO:0005829">
    <property type="term" value="C:cytosol"/>
    <property type="evidence" value="ECO:0007669"/>
    <property type="project" value="TreeGrafter"/>
</dbReference>
<dbReference type="GO" id="GO:0002161">
    <property type="term" value="F:aminoacyl-tRNA deacylase activity"/>
    <property type="evidence" value="ECO:0007669"/>
    <property type="project" value="InterPro"/>
</dbReference>
<dbReference type="GO" id="GO:0005524">
    <property type="term" value="F:ATP binding"/>
    <property type="evidence" value="ECO:0007669"/>
    <property type="project" value="UniProtKB-UniRule"/>
</dbReference>
<dbReference type="GO" id="GO:0140096">
    <property type="term" value="F:catalytic activity, acting on a protein"/>
    <property type="evidence" value="ECO:0007669"/>
    <property type="project" value="UniProtKB-ARBA"/>
</dbReference>
<dbReference type="GO" id="GO:0004827">
    <property type="term" value="F:proline-tRNA ligase activity"/>
    <property type="evidence" value="ECO:0007669"/>
    <property type="project" value="UniProtKB-UniRule"/>
</dbReference>
<dbReference type="GO" id="GO:0016740">
    <property type="term" value="F:transferase activity"/>
    <property type="evidence" value="ECO:0007669"/>
    <property type="project" value="UniProtKB-ARBA"/>
</dbReference>
<dbReference type="GO" id="GO:0006433">
    <property type="term" value="P:prolyl-tRNA aminoacylation"/>
    <property type="evidence" value="ECO:0007669"/>
    <property type="project" value="UniProtKB-UniRule"/>
</dbReference>
<dbReference type="CDD" id="cd04334">
    <property type="entry name" value="ProRS-INS"/>
    <property type="match status" value="1"/>
</dbReference>
<dbReference type="CDD" id="cd00861">
    <property type="entry name" value="ProRS_anticodon_short"/>
    <property type="match status" value="1"/>
</dbReference>
<dbReference type="FunFam" id="3.40.50.800:FF:000011">
    <property type="entry name" value="Proline--tRNA ligase"/>
    <property type="match status" value="1"/>
</dbReference>
<dbReference type="Gene3D" id="3.40.50.800">
    <property type="entry name" value="Anticodon-binding domain"/>
    <property type="match status" value="1"/>
</dbReference>
<dbReference type="Gene3D" id="3.30.930.10">
    <property type="entry name" value="Bira Bifunctional Protein, Domain 2"/>
    <property type="match status" value="2"/>
</dbReference>
<dbReference type="Gene3D" id="3.90.960.10">
    <property type="entry name" value="YbaK/aminoacyl-tRNA synthetase-associated domain"/>
    <property type="match status" value="1"/>
</dbReference>
<dbReference type="HAMAP" id="MF_01569">
    <property type="entry name" value="Pro_tRNA_synth_type1"/>
    <property type="match status" value="1"/>
</dbReference>
<dbReference type="InterPro" id="IPR002314">
    <property type="entry name" value="aa-tRNA-synt_IIb"/>
</dbReference>
<dbReference type="InterPro" id="IPR006195">
    <property type="entry name" value="aa-tRNA-synth_II"/>
</dbReference>
<dbReference type="InterPro" id="IPR045864">
    <property type="entry name" value="aa-tRNA-synth_II/BPL/LPL"/>
</dbReference>
<dbReference type="InterPro" id="IPR004154">
    <property type="entry name" value="Anticodon-bd"/>
</dbReference>
<dbReference type="InterPro" id="IPR036621">
    <property type="entry name" value="Anticodon-bd_dom_sf"/>
</dbReference>
<dbReference type="InterPro" id="IPR002316">
    <property type="entry name" value="Pro-tRNA-ligase_IIa"/>
</dbReference>
<dbReference type="InterPro" id="IPR004500">
    <property type="entry name" value="Pro-tRNA-synth_IIa_bac-type"/>
</dbReference>
<dbReference type="InterPro" id="IPR023717">
    <property type="entry name" value="Pro-tRNA-Synthase_IIa_type1"/>
</dbReference>
<dbReference type="InterPro" id="IPR050062">
    <property type="entry name" value="Pro-tRNA_synthetase"/>
</dbReference>
<dbReference type="InterPro" id="IPR044140">
    <property type="entry name" value="ProRS_anticodon_short"/>
</dbReference>
<dbReference type="InterPro" id="IPR036754">
    <property type="entry name" value="YbaK/aa-tRNA-synt-asso_dom_sf"/>
</dbReference>
<dbReference type="InterPro" id="IPR007214">
    <property type="entry name" value="YbaK/aa-tRNA-synth-assoc-dom"/>
</dbReference>
<dbReference type="NCBIfam" id="NF006625">
    <property type="entry name" value="PRK09194.1"/>
    <property type="match status" value="1"/>
</dbReference>
<dbReference type="NCBIfam" id="TIGR00409">
    <property type="entry name" value="proS_fam_II"/>
    <property type="match status" value="2"/>
</dbReference>
<dbReference type="PANTHER" id="PTHR42753">
    <property type="entry name" value="MITOCHONDRIAL RIBOSOME PROTEIN L39/PROLYL-TRNA LIGASE FAMILY MEMBER"/>
    <property type="match status" value="1"/>
</dbReference>
<dbReference type="PANTHER" id="PTHR42753:SF2">
    <property type="entry name" value="PROLINE--TRNA LIGASE"/>
    <property type="match status" value="1"/>
</dbReference>
<dbReference type="Pfam" id="PF03129">
    <property type="entry name" value="HGTP_anticodon"/>
    <property type="match status" value="1"/>
</dbReference>
<dbReference type="Pfam" id="PF00587">
    <property type="entry name" value="tRNA-synt_2b"/>
    <property type="match status" value="1"/>
</dbReference>
<dbReference type="Pfam" id="PF04073">
    <property type="entry name" value="tRNA_edit"/>
    <property type="match status" value="1"/>
</dbReference>
<dbReference type="PRINTS" id="PR01046">
    <property type="entry name" value="TRNASYNTHPRO"/>
</dbReference>
<dbReference type="SUPFAM" id="SSF52954">
    <property type="entry name" value="Class II aaRS ABD-related"/>
    <property type="match status" value="1"/>
</dbReference>
<dbReference type="SUPFAM" id="SSF55681">
    <property type="entry name" value="Class II aaRS and biotin synthetases"/>
    <property type="match status" value="1"/>
</dbReference>
<dbReference type="SUPFAM" id="SSF55826">
    <property type="entry name" value="YbaK/ProRS associated domain"/>
    <property type="match status" value="1"/>
</dbReference>
<dbReference type="PROSITE" id="PS50862">
    <property type="entry name" value="AA_TRNA_LIGASE_II"/>
    <property type="match status" value="1"/>
</dbReference>
<keyword id="KW-0030">Aminoacyl-tRNA synthetase</keyword>
<keyword id="KW-0067">ATP-binding</keyword>
<keyword id="KW-0963">Cytoplasm</keyword>
<keyword id="KW-0436">Ligase</keyword>
<keyword id="KW-0547">Nucleotide-binding</keyword>
<keyword id="KW-0648">Protein biosynthesis</keyword>
<keyword id="KW-1185">Reference proteome</keyword>
<feature type="chain" id="PRO_0000248788" description="Proline--tRNA ligase">
    <location>
        <begin position="1"/>
        <end position="620"/>
    </location>
</feature>
<comment type="function">
    <text evidence="1">Catalyzes the attachment of proline to tRNA(Pro) in a two-step reaction: proline is first activated by ATP to form Pro-AMP and then transferred to the acceptor end of tRNA(Pro). As ProRS can inadvertently accommodate and process non-cognate amino acids such as alanine and cysteine, to avoid such errors it has two additional distinct editing activities against alanine. One activity is designated as 'pretransfer' editing and involves the tRNA(Pro)-independent hydrolysis of activated Ala-AMP. The other activity is designated 'posttransfer' editing and involves deacylation of mischarged Ala-tRNA(Pro). The misacylated Cys-tRNA(Pro) is not edited by ProRS.</text>
</comment>
<comment type="catalytic activity">
    <reaction evidence="1">
        <text>tRNA(Pro) + L-proline + ATP = L-prolyl-tRNA(Pro) + AMP + diphosphate</text>
        <dbReference type="Rhea" id="RHEA:14305"/>
        <dbReference type="Rhea" id="RHEA-COMP:9700"/>
        <dbReference type="Rhea" id="RHEA-COMP:9702"/>
        <dbReference type="ChEBI" id="CHEBI:30616"/>
        <dbReference type="ChEBI" id="CHEBI:33019"/>
        <dbReference type="ChEBI" id="CHEBI:60039"/>
        <dbReference type="ChEBI" id="CHEBI:78442"/>
        <dbReference type="ChEBI" id="CHEBI:78532"/>
        <dbReference type="ChEBI" id="CHEBI:456215"/>
        <dbReference type="EC" id="6.1.1.15"/>
    </reaction>
</comment>
<comment type="subunit">
    <text evidence="1">Homodimer.</text>
</comment>
<comment type="subcellular location">
    <subcellularLocation>
        <location evidence="1">Cytoplasm</location>
    </subcellularLocation>
</comment>
<comment type="domain">
    <text evidence="1">Consists of three domains: the N-terminal catalytic domain, the editing domain and the C-terminal anticodon-binding domain.</text>
</comment>
<comment type="similarity">
    <text evidence="1">Belongs to the class-II aminoacyl-tRNA synthetase family. ProS type 1 subfamily.</text>
</comment>
<gene>
    <name evidence="1" type="primary">proS</name>
    <name type="ordered locus">stu0200</name>
</gene>
<protein>
    <recommendedName>
        <fullName evidence="1">Proline--tRNA ligase</fullName>
        <ecNumber evidence="1">6.1.1.15</ecNumber>
    </recommendedName>
    <alternativeName>
        <fullName evidence="1">Prolyl-tRNA synthetase</fullName>
        <shortName evidence="1">ProRS</shortName>
    </alternativeName>
</protein>
<organism>
    <name type="scientific">Streptococcus thermophilus (strain ATCC BAA-250 / LMG 18311)</name>
    <dbReference type="NCBI Taxonomy" id="264199"/>
    <lineage>
        <taxon>Bacteria</taxon>
        <taxon>Bacillati</taxon>
        <taxon>Bacillota</taxon>
        <taxon>Bacilli</taxon>
        <taxon>Lactobacillales</taxon>
        <taxon>Streptococcaceae</taxon>
        <taxon>Streptococcus</taxon>
    </lineage>
</organism>
<evidence type="ECO:0000255" key="1">
    <source>
        <dbReference type="HAMAP-Rule" id="MF_01569"/>
    </source>
</evidence>
<sequence length="620" mass="69140">MKQSKMLIPTLREMPSDAQVISHALMVRAGYVRQVSAGIYAYMPLANRAIEKFKTIMREEFEKIGAVEMLAPALLTADLWRESGRYETYGEDLYKLKNRDKSDFILGPTHEETFTVLVRDAVKSYKQLPLNLYQIQSKYRDEKRPRNGLLRTREFIMKDAYSFHQNYEDLDVTYEDYRKAYEAIFTRAGLEFKAIIGDGGAMGGKDSQEFMAVTPERTDLNRWVVLDKSIASLDEIPEDVMEEIKNELTSWLVAGEDTIAYSTESSYAANLEMATNAYTPATKVVTQEEVSRVETPGCKSIDDVAAFLNIPEEQTIKTLLFTADDEPVVALLVGNDQVNDVKLKNYLAADFLKPATEDEARQVFGANFGSLGPVNLPENVRIIADRKVQDVANAVVGANEDGYHLTGVNPERDFKAEYVDIRKVKEGEISPDGQGVLQFARGIEIGHIFKLGTRYSESMGANVLDENGRAVPIIMGCYGIGVSRILSAVIEQHARLFVNKTPKGQYRYAWGINFPKELAPYDVHLITVNTKDEEANALTDRLEAALAAEGYDVLIDDRNERVGSKFSDSDLIGLPIRVTVGKKASEGVVEVKIKATGDTIEVNADNLIETLAILTTEQDA</sequence>
<name>SYP_STRT2</name>
<proteinExistence type="inferred from homology"/>
<accession>Q5M674</accession>
<reference key="1">
    <citation type="journal article" date="2004" name="Nat. Biotechnol.">
        <title>Complete sequence and comparative genome analysis of the dairy bacterium Streptococcus thermophilus.</title>
        <authorList>
            <person name="Bolotin A."/>
            <person name="Quinquis B."/>
            <person name="Renault P."/>
            <person name="Sorokin A."/>
            <person name="Ehrlich S.D."/>
            <person name="Kulakauskas S."/>
            <person name="Lapidus A."/>
            <person name="Goltsman E."/>
            <person name="Mazur M."/>
            <person name="Pusch G.D."/>
            <person name="Fonstein M."/>
            <person name="Overbeek R."/>
            <person name="Kyprides N."/>
            <person name="Purnelle B."/>
            <person name="Prozzi D."/>
            <person name="Ngui K."/>
            <person name="Masuy D."/>
            <person name="Hancy F."/>
            <person name="Burteau S."/>
            <person name="Boutry M."/>
            <person name="Delcour J."/>
            <person name="Goffeau A."/>
            <person name="Hols P."/>
        </authorList>
    </citation>
    <scope>NUCLEOTIDE SEQUENCE [LARGE SCALE GENOMIC DNA]</scope>
    <source>
        <strain>ATCC BAA-250 / LMG 18311</strain>
    </source>
</reference>